<protein>
    <recommendedName>
        <fullName evidence="1">Octanoyltransferase</fullName>
        <ecNumber evidence="1">2.3.1.181</ecNumber>
    </recommendedName>
    <alternativeName>
        <fullName evidence="1">Lipoate-protein ligase B</fullName>
    </alternativeName>
    <alternativeName>
        <fullName evidence="1">Lipoyl/octanoyl transferase</fullName>
    </alternativeName>
    <alternativeName>
        <fullName evidence="1">Octanoyl-[acyl-carrier-protein]-protein N-octanoyltransferase</fullName>
    </alternativeName>
</protein>
<gene>
    <name evidence="1" type="primary">lipB</name>
    <name type="ordered locus">Rv2217</name>
    <name type="ORF">MTCY190.28</name>
</gene>
<name>LIPB_MYCTU</name>
<evidence type="ECO:0000255" key="1">
    <source>
        <dbReference type="HAMAP-Rule" id="MF_00013"/>
    </source>
</evidence>
<evidence type="ECO:0000255" key="2">
    <source>
        <dbReference type="PROSITE-ProRule" id="PRU01067"/>
    </source>
</evidence>
<evidence type="ECO:0000269" key="3">
    <source>
    </source>
</evidence>
<evidence type="ECO:0007829" key="4">
    <source>
        <dbReference type="PDB" id="1W66"/>
    </source>
</evidence>
<keyword id="KW-0002">3D-structure</keyword>
<keyword id="KW-0012">Acyltransferase</keyword>
<keyword id="KW-0963">Cytoplasm</keyword>
<keyword id="KW-1185">Reference proteome</keyword>
<keyword id="KW-0808">Transferase</keyword>
<reference key="1">
    <citation type="journal article" date="1998" name="Nature">
        <title>Deciphering the biology of Mycobacterium tuberculosis from the complete genome sequence.</title>
        <authorList>
            <person name="Cole S.T."/>
            <person name="Brosch R."/>
            <person name="Parkhill J."/>
            <person name="Garnier T."/>
            <person name="Churcher C.M."/>
            <person name="Harris D.E."/>
            <person name="Gordon S.V."/>
            <person name="Eiglmeier K."/>
            <person name="Gas S."/>
            <person name="Barry C.E. III"/>
            <person name="Tekaia F."/>
            <person name="Badcock K."/>
            <person name="Basham D."/>
            <person name="Brown D."/>
            <person name="Chillingworth T."/>
            <person name="Connor R."/>
            <person name="Davies R.M."/>
            <person name="Devlin K."/>
            <person name="Feltwell T."/>
            <person name="Gentles S."/>
            <person name="Hamlin N."/>
            <person name="Holroyd S."/>
            <person name="Hornsby T."/>
            <person name="Jagels K."/>
            <person name="Krogh A."/>
            <person name="McLean J."/>
            <person name="Moule S."/>
            <person name="Murphy L.D."/>
            <person name="Oliver S."/>
            <person name="Osborne J."/>
            <person name="Quail M.A."/>
            <person name="Rajandream M.A."/>
            <person name="Rogers J."/>
            <person name="Rutter S."/>
            <person name="Seeger K."/>
            <person name="Skelton S."/>
            <person name="Squares S."/>
            <person name="Squares R."/>
            <person name="Sulston J.E."/>
            <person name="Taylor K."/>
            <person name="Whitehead S."/>
            <person name="Barrell B.G."/>
        </authorList>
    </citation>
    <scope>NUCLEOTIDE SEQUENCE [LARGE SCALE GENOMIC DNA]</scope>
    <source>
        <strain>ATCC 25618 / H37Rv</strain>
    </source>
</reference>
<reference key="2">
    <citation type="journal article" date="2011" name="Mol. Cell. Proteomics">
        <title>Proteogenomic analysis of Mycobacterium tuberculosis by high resolution mass spectrometry.</title>
        <authorList>
            <person name="Kelkar D.S."/>
            <person name="Kumar D."/>
            <person name="Kumar P."/>
            <person name="Balakrishnan L."/>
            <person name="Muthusamy B."/>
            <person name="Yadav A.K."/>
            <person name="Shrivastava P."/>
            <person name="Marimuthu A."/>
            <person name="Anand S."/>
            <person name="Sundaram H."/>
            <person name="Kingsbury R."/>
            <person name="Harsha H.C."/>
            <person name="Nair B."/>
            <person name="Prasad T.S."/>
            <person name="Chauhan D.S."/>
            <person name="Katoch K."/>
            <person name="Katoch V.M."/>
            <person name="Kumar P."/>
            <person name="Chaerkady R."/>
            <person name="Ramachandran S."/>
            <person name="Dash D."/>
            <person name="Pandey A."/>
        </authorList>
    </citation>
    <scope>IDENTIFICATION BY MASS SPECTROMETRY [LARGE SCALE ANALYSIS]</scope>
    <source>
        <strain>ATCC 25618 / H37Rv</strain>
    </source>
</reference>
<reference key="3">
    <citation type="journal article" date="2006" name="Proc. Natl. Acad. Sci. U.S.A.">
        <title>The Mycobacterium tuberculosis LipB enzyme functions as a cysteine/lysine dyad acyltransferase.</title>
        <authorList>
            <person name="Ma Q."/>
            <person name="Zhao X."/>
            <person name="Eddine A.N."/>
            <person name="Geerlof A."/>
            <person name="Li X."/>
            <person name="Cronan J.E."/>
            <person name="Kaufmann S.H.E."/>
            <person name="Wilmanns M."/>
        </authorList>
    </citation>
    <scope>X-RAY CRYSTALLOGRAPHY (1.08 ANGSTROMS) IN COMPLEX WITH SUBSTRATE ANALOG</scope>
    <scope>FUNCTION</scope>
    <scope>REACTION MECHANISM</scope>
    <scope>SUBUNIT</scope>
    <scope>MUTAGENESIS OF LYS-142 AND CYS-176</scope>
    <source>
        <strain>ATCC 25618 / H37Rv</strain>
    </source>
</reference>
<sequence length="230" mass="24211">MTGSIRSKLSAIDVRQLGTVDYRTAWQLQRELADARVAGGADTLLLLEHPAVYTAGRRTETHERPIDGTPVVDTDRGGKITWHGPGQLVGYPIIGLAEPLDVVNYVRRLEESLIQVCADLGLHAGRVDGRSGVWLPGRPARKVAAIGVRVSRATTLHGFALNCDCDLAAFTAIVPCGISDAAVTSLSAELGRTVTVDEVRATVAAAVCAALDGVLPVGDRVPSHAVPSPL</sequence>
<organism>
    <name type="scientific">Mycobacterium tuberculosis (strain ATCC 25618 / H37Rv)</name>
    <dbReference type="NCBI Taxonomy" id="83332"/>
    <lineage>
        <taxon>Bacteria</taxon>
        <taxon>Bacillati</taxon>
        <taxon>Actinomycetota</taxon>
        <taxon>Actinomycetes</taxon>
        <taxon>Mycobacteriales</taxon>
        <taxon>Mycobacteriaceae</taxon>
        <taxon>Mycobacterium</taxon>
        <taxon>Mycobacterium tuberculosis complex</taxon>
    </lineage>
</organism>
<dbReference type="EC" id="2.3.1.181" evidence="1"/>
<dbReference type="EMBL" id="AL123456">
    <property type="protein sequence ID" value="CCP44994.1"/>
    <property type="molecule type" value="Genomic_DNA"/>
</dbReference>
<dbReference type="PIR" id="B70787">
    <property type="entry name" value="B70787"/>
</dbReference>
<dbReference type="RefSeq" id="NP_216733.1">
    <property type="nucleotide sequence ID" value="NC_000962.3"/>
</dbReference>
<dbReference type="RefSeq" id="WP_003411458.1">
    <property type="nucleotide sequence ID" value="NZ_NVQJ01000008.1"/>
</dbReference>
<dbReference type="PDB" id="1W66">
    <property type="method" value="X-ray"/>
    <property type="resolution" value="1.08 A"/>
    <property type="chains" value="A=3-230"/>
</dbReference>
<dbReference type="PDBsum" id="1W66"/>
<dbReference type="SMR" id="P9WK83"/>
<dbReference type="FunCoup" id="P9WK83">
    <property type="interactions" value="368"/>
</dbReference>
<dbReference type="STRING" id="83332.Rv2217"/>
<dbReference type="DrugBank" id="DB03600">
    <property type="generic name" value="Capric acid"/>
</dbReference>
<dbReference type="PaxDb" id="83332-Rv2217"/>
<dbReference type="DNASU" id="887626"/>
<dbReference type="GeneID" id="45426193"/>
<dbReference type="GeneID" id="887626"/>
<dbReference type="KEGG" id="mtu:Rv2217"/>
<dbReference type="KEGG" id="mtv:RVBD_2217"/>
<dbReference type="TubercuList" id="Rv2217"/>
<dbReference type="eggNOG" id="COG0321">
    <property type="taxonomic scope" value="Bacteria"/>
</dbReference>
<dbReference type="InParanoid" id="P9WK83"/>
<dbReference type="OrthoDB" id="9787061at2"/>
<dbReference type="PhylomeDB" id="P9WK83"/>
<dbReference type="BRENDA" id="2.3.1.181">
    <property type="organism ID" value="3445"/>
</dbReference>
<dbReference type="BRENDA" id="6.3.1.20">
    <property type="organism ID" value="3445"/>
</dbReference>
<dbReference type="UniPathway" id="UPA00538">
    <property type="reaction ID" value="UER00592"/>
</dbReference>
<dbReference type="EvolutionaryTrace" id="P9WK83"/>
<dbReference type="Proteomes" id="UP000001584">
    <property type="component" value="Chromosome"/>
</dbReference>
<dbReference type="GO" id="GO:0005737">
    <property type="term" value="C:cytoplasm"/>
    <property type="evidence" value="ECO:0007669"/>
    <property type="project" value="UniProtKB-SubCell"/>
</dbReference>
<dbReference type="GO" id="GO:0005886">
    <property type="term" value="C:plasma membrane"/>
    <property type="evidence" value="ECO:0007005"/>
    <property type="project" value="MTBBASE"/>
</dbReference>
<dbReference type="GO" id="GO:0033819">
    <property type="term" value="F:lipoyl(octanoyl) transferase activity"/>
    <property type="evidence" value="ECO:0000314"/>
    <property type="project" value="MTBBASE"/>
</dbReference>
<dbReference type="GO" id="GO:0009107">
    <property type="term" value="P:lipoate biosynthetic process"/>
    <property type="evidence" value="ECO:0000315"/>
    <property type="project" value="MTBBASE"/>
</dbReference>
<dbReference type="GO" id="GO:0036211">
    <property type="term" value="P:protein modification process"/>
    <property type="evidence" value="ECO:0007669"/>
    <property type="project" value="InterPro"/>
</dbReference>
<dbReference type="CDD" id="cd16444">
    <property type="entry name" value="LipB"/>
    <property type="match status" value="1"/>
</dbReference>
<dbReference type="FunFam" id="3.30.930.10:FF:000035">
    <property type="entry name" value="Putative lipoyltransferase 2, mitochondrial"/>
    <property type="match status" value="1"/>
</dbReference>
<dbReference type="Gene3D" id="3.30.930.10">
    <property type="entry name" value="Bira Bifunctional Protein, Domain 2"/>
    <property type="match status" value="1"/>
</dbReference>
<dbReference type="HAMAP" id="MF_00013">
    <property type="entry name" value="LipB"/>
    <property type="match status" value="1"/>
</dbReference>
<dbReference type="InterPro" id="IPR045864">
    <property type="entry name" value="aa-tRNA-synth_II/BPL/LPL"/>
</dbReference>
<dbReference type="InterPro" id="IPR004143">
    <property type="entry name" value="BPL_LPL_catalytic"/>
</dbReference>
<dbReference type="InterPro" id="IPR000544">
    <property type="entry name" value="Octanoyltransferase"/>
</dbReference>
<dbReference type="InterPro" id="IPR020605">
    <property type="entry name" value="Octanoyltransferase_CS"/>
</dbReference>
<dbReference type="NCBIfam" id="TIGR00214">
    <property type="entry name" value="lipB"/>
    <property type="match status" value="1"/>
</dbReference>
<dbReference type="NCBIfam" id="NF010925">
    <property type="entry name" value="PRK14345.1"/>
    <property type="match status" value="1"/>
</dbReference>
<dbReference type="PANTHER" id="PTHR10993:SF7">
    <property type="entry name" value="LIPOYLTRANSFERASE 2, MITOCHONDRIAL-RELATED"/>
    <property type="match status" value="1"/>
</dbReference>
<dbReference type="PANTHER" id="PTHR10993">
    <property type="entry name" value="OCTANOYLTRANSFERASE"/>
    <property type="match status" value="1"/>
</dbReference>
<dbReference type="Pfam" id="PF21948">
    <property type="entry name" value="LplA-B_cat"/>
    <property type="match status" value="1"/>
</dbReference>
<dbReference type="PIRSF" id="PIRSF016262">
    <property type="entry name" value="LPLase"/>
    <property type="match status" value="1"/>
</dbReference>
<dbReference type="SUPFAM" id="SSF55681">
    <property type="entry name" value="Class II aaRS and biotin synthetases"/>
    <property type="match status" value="1"/>
</dbReference>
<dbReference type="PROSITE" id="PS51733">
    <property type="entry name" value="BPL_LPL_CATALYTIC"/>
    <property type="match status" value="1"/>
</dbReference>
<dbReference type="PROSITE" id="PS01313">
    <property type="entry name" value="LIPB"/>
    <property type="match status" value="1"/>
</dbReference>
<proteinExistence type="evidence at protein level"/>
<accession>P9WK83</accession>
<accession>L0T8Z0</accession>
<accession>Q10404</accession>
<feature type="chain" id="PRO_0000062851" description="Octanoyltransferase">
    <location>
        <begin position="1"/>
        <end position="230"/>
    </location>
</feature>
<feature type="domain" description="BPL/LPL catalytic" evidence="2">
    <location>
        <begin position="38"/>
        <end position="215"/>
    </location>
</feature>
<feature type="active site" description="Acyl-thioester intermediate">
    <location>
        <position position="176"/>
    </location>
</feature>
<feature type="binding site">
    <location>
        <begin position="76"/>
        <end position="83"/>
    </location>
    <ligand>
        <name>substrate</name>
    </ligand>
</feature>
<feature type="binding site">
    <location>
        <begin position="145"/>
        <end position="147"/>
    </location>
    <ligand>
        <name>substrate</name>
    </ligand>
</feature>
<feature type="binding site">
    <location>
        <begin position="158"/>
        <end position="160"/>
    </location>
    <ligand>
        <name>substrate</name>
    </ligand>
</feature>
<feature type="site" description="Lowers pKa of active site Cys">
    <location>
        <position position="142"/>
    </location>
</feature>
<feature type="mutagenesis site" description="Loss of activity." evidence="3">
    <original>K</original>
    <variation>S</variation>
    <location>
        <position position="142"/>
    </location>
</feature>
<feature type="mutagenesis site" description="Loss of activity." evidence="3">
    <original>C</original>
    <variation>S</variation>
    <location>
        <position position="176"/>
    </location>
</feature>
<feature type="strand" evidence="4">
    <location>
        <begin position="13"/>
        <end position="19"/>
    </location>
</feature>
<feature type="helix" evidence="4">
    <location>
        <begin position="22"/>
        <end position="37"/>
    </location>
</feature>
<feature type="strand" evidence="4">
    <location>
        <begin position="43"/>
        <end position="48"/>
    </location>
</feature>
<feature type="strand" evidence="4">
    <location>
        <begin position="51"/>
        <end position="55"/>
    </location>
</feature>
<feature type="helix" evidence="4">
    <location>
        <begin position="61"/>
        <end position="63"/>
    </location>
</feature>
<feature type="strand" evidence="4">
    <location>
        <begin position="75"/>
        <end position="83"/>
    </location>
</feature>
<feature type="strand" evidence="4">
    <location>
        <begin position="87"/>
        <end position="93"/>
    </location>
</feature>
<feature type="helix" evidence="4">
    <location>
        <begin position="102"/>
        <end position="119"/>
    </location>
</feature>
<feature type="strand" evidence="4">
    <location>
        <begin position="125"/>
        <end position="127"/>
    </location>
</feature>
<feature type="strand" evidence="4">
    <location>
        <begin position="130"/>
        <end position="135"/>
    </location>
</feature>
<feature type="strand" evidence="4">
    <location>
        <begin position="137"/>
        <end position="139"/>
    </location>
</feature>
<feature type="strand" evidence="4">
    <location>
        <begin position="141"/>
        <end position="151"/>
    </location>
</feature>
<feature type="strand" evidence="4">
    <location>
        <begin position="154"/>
        <end position="164"/>
    </location>
</feature>
<feature type="helix" evidence="4">
    <location>
        <begin position="168"/>
        <end position="172"/>
    </location>
</feature>
<feature type="helix" evidence="4">
    <location>
        <begin position="175"/>
        <end position="177"/>
    </location>
</feature>
<feature type="strand" evidence="4">
    <location>
        <begin position="179"/>
        <end position="183"/>
    </location>
</feature>
<feature type="helix" evidence="4">
    <location>
        <begin position="186"/>
        <end position="190"/>
    </location>
</feature>
<feature type="helix" evidence="4">
    <location>
        <begin position="196"/>
        <end position="211"/>
    </location>
</feature>
<comment type="function">
    <text evidence="1 3">Catalyzes the transfer of endogenously produced octanoic acid from octanoyl-acyl-carrier-protein onto the lipoyl domains of lipoate-dependent enzymes. Lipoyl-ACP can also act as a substrate although octanoyl-ACP is likely to be the physiological substrate.</text>
</comment>
<comment type="catalytic activity">
    <reaction evidence="1">
        <text>octanoyl-[ACP] + L-lysyl-[protein] = N(6)-octanoyl-L-lysyl-[protein] + holo-[ACP] + H(+)</text>
        <dbReference type="Rhea" id="RHEA:17665"/>
        <dbReference type="Rhea" id="RHEA-COMP:9636"/>
        <dbReference type="Rhea" id="RHEA-COMP:9685"/>
        <dbReference type="Rhea" id="RHEA-COMP:9752"/>
        <dbReference type="Rhea" id="RHEA-COMP:9928"/>
        <dbReference type="ChEBI" id="CHEBI:15378"/>
        <dbReference type="ChEBI" id="CHEBI:29969"/>
        <dbReference type="ChEBI" id="CHEBI:64479"/>
        <dbReference type="ChEBI" id="CHEBI:78463"/>
        <dbReference type="ChEBI" id="CHEBI:78809"/>
        <dbReference type="EC" id="2.3.1.181"/>
    </reaction>
</comment>
<comment type="pathway">
    <text evidence="1">Protein modification; protein lipoylation via endogenous pathway; protein N(6)-(lipoyl)lysine from octanoyl-[acyl-carrier-protein]: step 1/2.</text>
</comment>
<comment type="subunit">
    <text evidence="3">Monomer.</text>
</comment>
<comment type="subcellular location">
    <subcellularLocation>
        <location evidence="1">Cytoplasm</location>
    </subcellularLocation>
</comment>
<comment type="miscellaneous">
    <text>In the reaction, the free carboxyl group of octanoic acid is attached via an amide linkage to the epsilon-amino group of a specific lysine residue of lipoyl domains of lipoate-dependent enzymes.</text>
</comment>
<comment type="similarity">
    <text evidence="1">Belongs to the LipB family.</text>
</comment>